<organism>
    <name type="scientific">Bacillus subtilis (strain 168)</name>
    <dbReference type="NCBI Taxonomy" id="224308"/>
    <lineage>
        <taxon>Bacteria</taxon>
        <taxon>Bacillati</taxon>
        <taxon>Bacillota</taxon>
        <taxon>Bacilli</taxon>
        <taxon>Bacillales</taxon>
        <taxon>Bacillaceae</taxon>
        <taxon>Bacillus</taxon>
    </lineage>
</organism>
<protein>
    <recommendedName>
        <fullName>SPbeta prophage-derived uncharacterized protein YonV</fullName>
    </recommendedName>
</protein>
<name>YONV_BACSU</name>
<accession>O31939</accession>
<dbReference type="EMBL" id="AL009126">
    <property type="protein sequence ID" value="CAB14016.1"/>
    <property type="molecule type" value="Genomic_DNA"/>
</dbReference>
<dbReference type="RefSeq" id="NP_389981.1">
    <property type="nucleotide sequence ID" value="NC_000964.3"/>
</dbReference>
<dbReference type="RefSeq" id="WP_004399445.1">
    <property type="nucleotide sequence ID" value="NZ_OZ025638.1"/>
</dbReference>
<dbReference type="FunCoup" id="O31939">
    <property type="interactions" value="2"/>
</dbReference>
<dbReference type="STRING" id="224308.BSU20980"/>
<dbReference type="PaxDb" id="224308-BSU20980"/>
<dbReference type="EnsemblBacteria" id="CAB14016">
    <property type="protein sequence ID" value="CAB14016"/>
    <property type="gene ID" value="BSU_20980"/>
</dbReference>
<dbReference type="GeneID" id="939174"/>
<dbReference type="KEGG" id="bsu:BSU20980"/>
<dbReference type="PATRIC" id="fig|224308.179.peg.2290"/>
<dbReference type="eggNOG" id="ENOG502ZASU">
    <property type="taxonomic scope" value="Bacteria"/>
</dbReference>
<dbReference type="InParanoid" id="O31939"/>
<dbReference type="OrthoDB" id="1898893at2"/>
<dbReference type="BioCyc" id="BSUB:BSU20980-MONOMER"/>
<dbReference type="Proteomes" id="UP000001570">
    <property type="component" value="Chromosome"/>
</dbReference>
<keyword id="KW-1185">Reference proteome</keyword>
<gene>
    <name type="primary">yonV</name>
    <name type="ordered locus">BSU20980</name>
</gene>
<proteinExistence type="predicted"/>
<reference key="1">
    <citation type="journal article" date="1997" name="Nature">
        <title>The complete genome sequence of the Gram-positive bacterium Bacillus subtilis.</title>
        <authorList>
            <person name="Kunst F."/>
            <person name="Ogasawara N."/>
            <person name="Moszer I."/>
            <person name="Albertini A.M."/>
            <person name="Alloni G."/>
            <person name="Azevedo V."/>
            <person name="Bertero M.G."/>
            <person name="Bessieres P."/>
            <person name="Bolotin A."/>
            <person name="Borchert S."/>
            <person name="Borriss R."/>
            <person name="Boursier L."/>
            <person name="Brans A."/>
            <person name="Braun M."/>
            <person name="Brignell S.C."/>
            <person name="Bron S."/>
            <person name="Brouillet S."/>
            <person name="Bruschi C.V."/>
            <person name="Caldwell B."/>
            <person name="Capuano V."/>
            <person name="Carter N.M."/>
            <person name="Choi S.-K."/>
            <person name="Codani J.-J."/>
            <person name="Connerton I.F."/>
            <person name="Cummings N.J."/>
            <person name="Daniel R.A."/>
            <person name="Denizot F."/>
            <person name="Devine K.M."/>
            <person name="Duesterhoeft A."/>
            <person name="Ehrlich S.D."/>
            <person name="Emmerson P.T."/>
            <person name="Entian K.-D."/>
            <person name="Errington J."/>
            <person name="Fabret C."/>
            <person name="Ferrari E."/>
            <person name="Foulger D."/>
            <person name="Fritz C."/>
            <person name="Fujita M."/>
            <person name="Fujita Y."/>
            <person name="Fuma S."/>
            <person name="Galizzi A."/>
            <person name="Galleron N."/>
            <person name="Ghim S.-Y."/>
            <person name="Glaser P."/>
            <person name="Goffeau A."/>
            <person name="Golightly E.J."/>
            <person name="Grandi G."/>
            <person name="Guiseppi G."/>
            <person name="Guy B.J."/>
            <person name="Haga K."/>
            <person name="Haiech J."/>
            <person name="Harwood C.R."/>
            <person name="Henaut A."/>
            <person name="Hilbert H."/>
            <person name="Holsappel S."/>
            <person name="Hosono S."/>
            <person name="Hullo M.-F."/>
            <person name="Itaya M."/>
            <person name="Jones L.-M."/>
            <person name="Joris B."/>
            <person name="Karamata D."/>
            <person name="Kasahara Y."/>
            <person name="Klaerr-Blanchard M."/>
            <person name="Klein C."/>
            <person name="Kobayashi Y."/>
            <person name="Koetter P."/>
            <person name="Koningstein G."/>
            <person name="Krogh S."/>
            <person name="Kumano M."/>
            <person name="Kurita K."/>
            <person name="Lapidus A."/>
            <person name="Lardinois S."/>
            <person name="Lauber J."/>
            <person name="Lazarevic V."/>
            <person name="Lee S.-M."/>
            <person name="Levine A."/>
            <person name="Liu H."/>
            <person name="Masuda S."/>
            <person name="Mauel C."/>
            <person name="Medigue C."/>
            <person name="Medina N."/>
            <person name="Mellado R.P."/>
            <person name="Mizuno M."/>
            <person name="Moestl D."/>
            <person name="Nakai S."/>
            <person name="Noback M."/>
            <person name="Noone D."/>
            <person name="O'Reilly M."/>
            <person name="Ogawa K."/>
            <person name="Ogiwara A."/>
            <person name="Oudega B."/>
            <person name="Park S.-H."/>
            <person name="Parro V."/>
            <person name="Pohl T.M."/>
            <person name="Portetelle D."/>
            <person name="Porwollik S."/>
            <person name="Prescott A.M."/>
            <person name="Presecan E."/>
            <person name="Pujic P."/>
            <person name="Purnelle B."/>
            <person name="Rapoport G."/>
            <person name="Rey M."/>
            <person name="Reynolds S."/>
            <person name="Rieger M."/>
            <person name="Rivolta C."/>
            <person name="Rocha E."/>
            <person name="Roche B."/>
            <person name="Rose M."/>
            <person name="Sadaie Y."/>
            <person name="Sato T."/>
            <person name="Scanlan E."/>
            <person name="Schleich S."/>
            <person name="Schroeter R."/>
            <person name="Scoffone F."/>
            <person name="Sekiguchi J."/>
            <person name="Sekowska A."/>
            <person name="Seror S.J."/>
            <person name="Serror P."/>
            <person name="Shin B.-S."/>
            <person name="Soldo B."/>
            <person name="Sorokin A."/>
            <person name="Tacconi E."/>
            <person name="Takagi T."/>
            <person name="Takahashi H."/>
            <person name="Takemaru K."/>
            <person name="Takeuchi M."/>
            <person name="Tamakoshi A."/>
            <person name="Tanaka T."/>
            <person name="Terpstra P."/>
            <person name="Tognoni A."/>
            <person name="Tosato V."/>
            <person name="Uchiyama S."/>
            <person name="Vandenbol M."/>
            <person name="Vannier F."/>
            <person name="Vassarotti A."/>
            <person name="Viari A."/>
            <person name="Wambutt R."/>
            <person name="Wedler E."/>
            <person name="Wedler H."/>
            <person name="Weitzenegger T."/>
            <person name="Winters P."/>
            <person name="Wipat A."/>
            <person name="Yamamoto H."/>
            <person name="Yamane K."/>
            <person name="Yasumoto K."/>
            <person name="Yata K."/>
            <person name="Yoshida K."/>
            <person name="Yoshikawa H.-F."/>
            <person name="Zumstein E."/>
            <person name="Yoshikawa H."/>
            <person name="Danchin A."/>
        </authorList>
    </citation>
    <scope>NUCLEOTIDE SEQUENCE [LARGE SCALE GENOMIC DNA]</scope>
    <source>
        <strain>168</strain>
    </source>
</reference>
<sequence>MERVKVIDSIMGSGKTTYIIKMMNEAPKNEHFIFITPYLDEVTRIKRSCTNRKFYEPKIHSEEGETLYKLDSLHKHLADNNDIVTTHALFSMANETTKELIYSGNYTLILDETMEVVKKLNISKDDLDMLFQNEWIKNNNGTIIWNDEQERNLNREYKGEFQTLKHLAKSKNLILHNESVLFWQFPADIFAQFKQVYNLTYLFDAQIQKYYYDINGIEYELYAVVKDNDSYKLMQHSRQFDKAKKDVLRHKIKIYEGDLNKIGDDYYALSKNWFEKRSVLHKRLKNNILNYYQNILKSKSKGNLWTTFKSHKSKLSGKGYTKGFLACNIKATNEYSHKRSLVYSINRFVNPAIDDYFRSKGIIINEDNFALSEMIQWIWRSAIRNGQDINIYVPSSRMRKLLMDWLENQR</sequence>
<feature type="chain" id="PRO_0000360457" description="SPbeta prophage-derived uncharacterized protein YonV">
    <location>
        <begin position="1"/>
        <end position="410"/>
    </location>
</feature>